<evidence type="ECO:0000250" key="1"/>
<evidence type="ECO:0000269" key="2">
    <source>
    </source>
</evidence>
<evidence type="ECO:0000269" key="3">
    <source>
    </source>
</evidence>
<evidence type="ECO:0000305" key="4"/>
<evidence type="ECO:0007829" key="5">
    <source>
        <dbReference type="PDB" id="7EU0"/>
    </source>
</evidence>
<reference key="1">
    <citation type="journal article" date="2000" name="Nature">
        <title>Sequence and analysis of chromosome 1 of the plant Arabidopsis thaliana.</title>
        <authorList>
            <person name="Theologis A."/>
            <person name="Ecker J.R."/>
            <person name="Palm C.J."/>
            <person name="Federspiel N.A."/>
            <person name="Kaul S."/>
            <person name="White O."/>
            <person name="Alonso J."/>
            <person name="Altafi H."/>
            <person name="Araujo R."/>
            <person name="Bowman C.L."/>
            <person name="Brooks S.Y."/>
            <person name="Buehler E."/>
            <person name="Chan A."/>
            <person name="Chao Q."/>
            <person name="Chen H."/>
            <person name="Cheuk R.F."/>
            <person name="Chin C.W."/>
            <person name="Chung M.K."/>
            <person name="Conn L."/>
            <person name="Conway A.B."/>
            <person name="Conway A.R."/>
            <person name="Creasy T.H."/>
            <person name="Dewar K."/>
            <person name="Dunn P."/>
            <person name="Etgu P."/>
            <person name="Feldblyum T.V."/>
            <person name="Feng J.-D."/>
            <person name="Fong B."/>
            <person name="Fujii C.Y."/>
            <person name="Gill J.E."/>
            <person name="Goldsmith A.D."/>
            <person name="Haas B."/>
            <person name="Hansen N.F."/>
            <person name="Hughes B."/>
            <person name="Huizar L."/>
            <person name="Hunter J.L."/>
            <person name="Jenkins J."/>
            <person name="Johnson-Hopson C."/>
            <person name="Khan S."/>
            <person name="Khaykin E."/>
            <person name="Kim C.J."/>
            <person name="Koo H.L."/>
            <person name="Kremenetskaia I."/>
            <person name="Kurtz D.B."/>
            <person name="Kwan A."/>
            <person name="Lam B."/>
            <person name="Langin-Hooper S."/>
            <person name="Lee A."/>
            <person name="Lee J.M."/>
            <person name="Lenz C.A."/>
            <person name="Li J.H."/>
            <person name="Li Y.-P."/>
            <person name="Lin X."/>
            <person name="Liu S.X."/>
            <person name="Liu Z.A."/>
            <person name="Luros J.S."/>
            <person name="Maiti R."/>
            <person name="Marziali A."/>
            <person name="Militscher J."/>
            <person name="Miranda M."/>
            <person name="Nguyen M."/>
            <person name="Nierman W.C."/>
            <person name="Osborne B.I."/>
            <person name="Pai G."/>
            <person name="Peterson J."/>
            <person name="Pham P.K."/>
            <person name="Rizzo M."/>
            <person name="Rooney T."/>
            <person name="Rowley D."/>
            <person name="Sakano H."/>
            <person name="Salzberg S.L."/>
            <person name="Schwartz J.R."/>
            <person name="Shinn P."/>
            <person name="Southwick A.M."/>
            <person name="Sun H."/>
            <person name="Tallon L.J."/>
            <person name="Tambunga G."/>
            <person name="Toriumi M.J."/>
            <person name="Town C.D."/>
            <person name="Utterback T."/>
            <person name="Van Aken S."/>
            <person name="Vaysberg M."/>
            <person name="Vysotskaia V.S."/>
            <person name="Walker M."/>
            <person name="Wu D."/>
            <person name="Yu G."/>
            <person name="Fraser C.M."/>
            <person name="Venter J.C."/>
            <person name="Davis R.W."/>
        </authorList>
    </citation>
    <scope>NUCLEOTIDE SEQUENCE [LARGE SCALE GENOMIC DNA]</scope>
    <source>
        <strain>cv. Columbia</strain>
    </source>
</reference>
<reference key="2">
    <citation type="journal article" date="2017" name="Plant J.">
        <title>Araport11: a complete reannotation of the Arabidopsis thaliana reference genome.</title>
        <authorList>
            <person name="Cheng C.Y."/>
            <person name="Krishnakumar V."/>
            <person name="Chan A.P."/>
            <person name="Thibaud-Nissen F."/>
            <person name="Schobel S."/>
            <person name="Town C.D."/>
        </authorList>
    </citation>
    <scope>GENOME REANNOTATION</scope>
    <source>
        <strain>cv. Columbia</strain>
    </source>
</reference>
<reference key="3">
    <citation type="journal article" date="2002" name="Science">
        <title>Functional annotation of a full-length Arabidopsis cDNA collection.</title>
        <authorList>
            <person name="Seki M."/>
            <person name="Narusaka M."/>
            <person name="Kamiya A."/>
            <person name="Ishida J."/>
            <person name="Satou M."/>
            <person name="Sakurai T."/>
            <person name="Nakajima M."/>
            <person name="Enju A."/>
            <person name="Akiyama K."/>
            <person name="Oono Y."/>
            <person name="Muramatsu M."/>
            <person name="Hayashizaki Y."/>
            <person name="Kawai J."/>
            <person name="Carninci P."/>
            <person name="Itoh M."/>
            <person name="Ishii Y."/>
            <person name="Arakawa T."/>
            <person name="Shibata K."/>
            <person name="Shinagawa A."/>
            <person name="Shinozaki K."/>
        </authorList>
    </citation>
    <scope>NUCLEOTIDE SEQUENCE [LARGE SCALE MRNA]</scope>
    <source>
        <strain>cv. Columbia</strain>
    </source>
</reference>
<reference key="4">
    <citation type="submission" date="2006-05" db="EMBL/GenBank/DDBJ databases">
        <title>Arabidopsis ORF clones.</title>
        <authorList>
            <person name="Shinn P."/>
            <person name="Chen H."/>
            <person name="Kim C.J."/>
            <person name="Quinitio C."/>
            <person name="Ecker J.R."/>
        </authorList>
    </citation>
    <scope>NUCLEOTIDE SEQUENCE [LARGE SCALE MRNA]</scope>
</reference>
<reference key="5">
    <citation type="submission" date="2006-07" db="EMBL/GenBank/DDBJ databases">
        <title>Large-scale analysis of RIKEN Arabidopsis full-length (RAFL) cDNAs.</title>
        <authorList>
            <person name="Totoki Y."/>
            <person name="Seki M."/>
            <person name="Ishida J."/>
            <person name="Nakajima M."/>
            <person name="Enju A."/>
            <person name="Kamiya A."/>
            <person name="Narusaka M."/>
            <person name="Shin-i T."/>
            <person name="Nakagawa M."/>
            <person name="Sakamoto N."/>
            <person name="Oishi K."/>
            <person name="Kohara Y."/>
            <person name="Kobayashi M."/>
            <person name="Toyoda A."/>
            <person name="Sakaki Y."/>
            <person name="Sakurai T."/>
            <person name="Iida K."/>
            <person name="Akiyama K."/>
            <person name="Satou M."/>
            <person name="Toyoda T."/>
            <person name="Konagaya A."/>
            <person name="Carninci P."/>
            <person name="Kawai J."/>
            <person name="Hayashizaki Y."/>
            <person name="Shinozaki K."/>
        </authorList>
    </citation>
    <scope>NUCLEOTIDE SEQUENCE [LARGE SCALE MRNA]</scope>
    <source>
        <strain>cv. Columbia</strain>
    </source>
</reference>
<reference key="6">
    <citation type="submission" date="2002-03" db="EMBL/GenBank/DDBJ databases">
        <title>Full-length cDNA from Arabidopsis thaliana.</title>
        <authorList>
            <person name="Brover V.V."/>
            <person name="Troukhan M.E."/>
            <person name="Alexandrov N.A."/>
            <person name="Lu Y.-P."/>
            <person name="Flavell R.B."/>
            <person name="Feldmann K.A."/>
        </authorList>
    </citation>
    <scope>NUCLEOTIDE SEQUENCE [LARGE SCALE MRNA]</scope>
</reference>
<reference key="7">
    <citation type="journal article" date="2009" name="Mol. Cell">
        <title>Subunit compositions of the RNA-silencing enzymes Pol IV and Pol V reveal their origins as specialized forms of RNA polymerase II.</title>
        <authorList>
            <person name="Ream T.S."/>
            <person name="Haag J.R."/>
            <person name="Wierzbicki A.T."/>
            <person name="Nicora C.D."/>
            <person name="Norbeck A.D."/>
            <person name="Zhu J.K."/>
            <person name="Hagen G."/>
            <person name="Guilfoyle T.J."/>
            <person name="Pasa-Tolic L."/>
            <person name="Pikaard C.S."/>
        </authorList>
    </citation>
    <scope>FUNCTION</scope>
    <scope>IDENTIFICATION BY MASS SPECTROMETRY</scope>
    <scope>SUBUNIT</scope>
    <scope>NOMENCLATURE</scope>
</reference>
<reference key="8">
    <citation type="journal article" date="2011" name="PLoS Genet.">
        <title>SHH1, a homeodomain protein required for DNA methylation, as well as RDR2, RDM4, and chromatin remodeling factors, associate with RNA polymerase IV.</title>
        <authorList>
            <person name="Law J.A."/>
            <person name="Vashisht A.A."/>
            <person name="Wohlschlegel J.A."/>
            <person name="Jacobsen S.E."/>
        </authorList>
    </citation>
    <scope>IDENTIFICATION BY MASS SPECTROMETRY</scope>
    <scope>INTERACTION WITH NRPD1</scope>
    <scope>SUBUNIT</scope>
</reference>
<proteinExistence type="evidence at protein level"/>
<name>NRPBA_ARATH</name>
<feature type="chain" id="PRO_0000423319" description="DNA-directed RNA polymerases II, IV and V subunit 10">
    <location>
        <begin position="1"/>
        <end position="71"/>
    </location>
</feature>
<feature type="binding site" evidence="1">
    <location>
        <position position="7"/>
    </location>
    <ligand>
        <name>Zn(2+)</name>
        <dbReference type="ChEBI" id="CHEBI:29105"/>
    </ligand>
</feature>
<feature type="binding site" evidence="1">
    <location>
        <position position="10"/>
    </location>
    <ligand>
        <name>Zn(2+)</name>
        <dbReference type="ChEBI" id="CHEBI:29105"/>
    </ligand>
</feature>
<feature type="binding site" evidence="1">
    <location>
        <position position="44"/>
    </location>
    <ligand>
        <name>Zn(2+)</name>
        <dbReference type="ChEBI" id="CHEBI:29105"/>
    </ligand>
</feature>
<feature type="binding site" evidence="1">
    <location>
        <position position="45"/>
    </location>
    <ligand>
        <name>Zn(2+)</name>
        <dbReference type="ChEBI" id="CHEBI:29105"/>
    </ligand>
</feature>
<feature type="strand" evidence="5">
    <location>
        <begin position="8"/>
        <end position="10"/>
    </location>
</feature>
<feature type="helix" evidence="5">
    <location>
        <begin position="18"/>
        <end position="26"/>
    </location>
</feature>
<feature type="helix" evidence="5">
    <location>
        <begin position="31"/>
        <end position="37"/>
    </location>
</feature>
<feature type="helix" evidence="5">
    <location>
        <begin position="43"/>
        <end position="51"/>
    </location>
</feature>
<feature type="helix" evidence="5">
    <location>
        <begin position="56"/>
        <end position="59"/>
    </location>
</feature>
<comment type="function">
    <text evidence="2">DNA-dependent RNA polymerase catalyzes the transcription of DNA into RNA using the four ribonucleoside triphosphates as substrates. Component of RNA polymerase II which synthesizes mRNA precursors and many functional non-coding RNAs. Pol II is the central component of the basal RNA polymerase II transcription machinery. It is composed of mobile elements that move relative to each other. Component of RNA polymerases IV and V which mediate short-interfering RNAs (siRNA) accumulation and subsequent RNA-directed DNA methylation-dependent (RdDM) transcriptional gene silencing (TGS) of endogenous repeated sequences, including transposable elements.</text>
</comment>
<comment type="subunit">
    <text evidence="2 3">Component of the RNA polymerase II, IV and V complexes. Interacts with NRPD1.</text>
</comment>
<comment type="subcellular location">
    <subcellularLocation>
        <location evidence="1">Nucleus</location>
    </subcellularLocation>
</comment>
<comment type="similarity">
    <text evidence="4">Belongs to the archaeal Rpo10/eukaryotic RPB10 RNA polymerase subunit family.</text>
</comment>
<gene>
    <name type="primary">NRPB10</name>
    <name type="synonym">NRPD10</name>
    <name type="synonym">NRPE10</name>
    <name type="ordered locus">At1g11475</name>
    <name type="ORF">T23J18.30</name>
</gene>
<accession>Q8LFJ6</accession>
<sequence>MIIPVRCFTCGKVIGNKWDQYLDLLQLDYTEGDALDALQLVRYCCRRMLMTHVDLIEKLLNYNTLEKSDNS</sequence>
<protein>
    <recommendedName>
        <fullName>DNA-directed RNA polymerases II, IV and V subunit 10</fullName>
    </recommendedName>
    <alternativeName>
        <fullName>DNA-directed RNA Polymerase II subunit L</fullName>
    </alternativeName>
</protein>
<dbReference type="EMBL" id="AC011661">
    <property type="status" value="NOT_ANNOTATED_CDS"/>
    <property type="molecule type" value="Genomic_DNA"/>
</dbReference>
<dbReference type="EMBL" id="CP002684">
    <property type="protein sequence ID" value="AEE28741.1"/>
    <property type="molecule type" value="Genomic_DNA"/>
</dbReference>
<dbReference type="EMBL" id="AK118363">
    <property type="protein sequence ID" value="BAC42977.1"/>
    <property type="molecule type" value="mRNA"/>
</dbReference>
<dbReference type="EMBL" id="BT025306">
    <property type="protein sequence ID" value="ABF47122.1"/>
    <property type="molecule type" value="mRNA"/>
</dbReference>
<dbReference type="EMBL" id="AK228397">
    <property type="protein sequence ID" value="BAF00334.1"/>
    <property type="molecule type" value="mRNA"/>
</dbReference>
<dbReference type="EMBL" id="AY084808">
    <property type="protein sequence ID" value="AAM61374.1"/>
    <property type="molecule type" value="mRNA"/>
</dbReference>
<dbReference type="RefSeq" id="NP_849640.1">
    <property type="nucleotide sequence ID" value="NM_179309.3"/>
</dbReference>
<dbReference type="PDB" id="7EU0">
    <property type="method" value="EM"/>
    <property type="resolution" value="3.16 A"/>
    <property type="chains" value="J=1-71"/>
</dbReference>
<dbReference type="PDB" id="7EU1">
    <property type="method" value="EM"/>
    <property type="resolution" value="3.86 A"/>
    <property type="chains" value="J=1-71"/>
</dbReference>
<dbReference type="PDB" id="8HYJ">
    <property type="method" value="EM"/>
    <property type="resolution" value="4.30 A"/>
    <property type="chains" value="J=1-71"/>
</dbReference>
<dbReference type="PDB" id="8XMB">
    <property type="method" value="EM"/>
    <property type="resolution" value="3.40 A"/>
    <property type="chains" value="J=1-71"/>
</dbReference>
<dbReference type="PDB" id="8XMC">
    <property type="method" value="EM"/>
    <property type="resolution" value="3.10 A"/>
    <property type="chains" value="J=1-71"/>
</dbReference>
<dbReference type="PDB" id="8XMD">
    <property type="method" value="EM"/>
    <property type="resolution" value="3.40 A"/>
    <property type="chains" value="J=1-71"/>
</dbReference>
<dbReference type="PDB" id="8XME">
    <property type="method" value="EM"/>
    <property type="resolution" value="3.10 A"/>
    <property type="chains" value="J=1-71"/>
</dbReference>
<dbReference type="PDBsum" id="7EU0"/>
<dbReference type="PDBsum" id="7EU1"/>
<dbReference type="PDBsum" id="8HYJ"/>
<dbReference type="PDBsum" id="8XMB"/>
<dbReference type="PDBsum" id="8XMC"/>
<dbReference type="PDBsum" id="8XMD"/>
<dbReference type="PDBsum" id="8XME"/>
<dbReference type="EMDB" id="EMD-31305"/>
<dbReference type="EMDB" id="EMD-31306"/>
<dbReference type="EMDB" id="EMD-35086"/>
<dbReference type="EMDB" id="EMD-38470"/>
<dbReference type="EMDB" id="EMD-38471"/>
<dbReference type="EMDB" id="EMD-38472"/>
<dbReference type="EMDB" id="EMD-38473"/>
<dbReference type="SMR" id="Q8LFJ6"/>
<dbReference type="BioGRID" id="22930">
    <property type="interactions" value="49"/>
</dbReference>
<dbReference type="FunCoup" id="Q8LFJ6">
    <property type="interactions" value="1959"/>
</dbReference>
<dbReference type="IntAct" id="Q8LFJ6">
    <property type="interactions" value="1"/>
</dbReference>
<dbReference type="STRING" id="3702.Q8LFJ6"/>
<dbReference type="PaxDb" id="3702-AT1G11475.1"/>
<dbReference type="ProteomicsDB" id="249448"/>
<dbReference type="EnsemblPlants" id="AT1G11475.1">
    <property type="protein sequence ID" value="AT1G11475.1"/>
    <property type="gene ID" value="AT1G11475"/>
</dbReference>
<dbReference type="GeneID" id="837690"/>
<dbReference type="Gramene" id="AT1G11475.1">
    <property type="protein sequence ID" value="AT1G11475.1"/>
    <property type="gene ID" value="AT1G11475"/>
</dbReference>
<dbReference type="KEGG" id="ath:AT1G11475"/>
<dbReference type="Araport" id="AT1G11475"/>
<dbReference type="TAIR" id="AT1G11475">
    <property type="gene designation" value="NRPB10"/>
</dbReference>
<dbReference type="eggNOG" id="KOG3497">
    <property type="taxonomic scope" value="Eukaryota"/>
</dbReference>
<dbReference type="HOGENOM" id="CLU_143122_2_1_1"/>
<dbReference type="InParanoid" id="Q8LFJ6"/>
<dbReference type="OMA" id="TMQMIGP"/>
<dbReference type="PhylomeDB" id="Q8LFJ6"/>
<dbReference type="CD-CODE" id="4299E36E">
    <property type="entry name" value="Nucleolus"/>
</dbReference>
<dbReference type="PRO" id="PR:Q8LFJ6"/>
<dbReference type="Proteomes" id="UP000006548">
    <property type="component" value="Chromosome 1"/>
</dbReference>
<dbReference type="ExpressionAtlas" id="Q8LFJ6">
    <property type="expression patterns" value="baseline and differential"/>
</dbReference>
<dbReference type="GO" id="GO:0005665">
    <property type="term" value="C:RNA polymerase II, core complex"/>
    <property type="evidence" value="ECO:0000314"/>
    <property type="project" value="UniProtKB"/>
</dbReference>
<dbReference type="GO" id="GO:0000418">
    <property type="term" value="C:RNA polymerase IV complex"/>
    <property type="evidence" value="ECO:0000314"/>
    <property type="project" value="UniProtKB"/>
</dbReference>
<dbReference type="GO" id="GO:0000419">
    <property type="term" value="C:RNA polymerase V complex"/>
    <property type="evidence" value="ECO:0000314"/>
    <property type="project" value="UniProtKB"/>
</dbReference>
<dbReference type="GO" id="GO:0003677">
    <property type="term" value="F:DNA binding"/>
    <property type="evidence" value="ECO:0007669"/>
    <property type="project" value="InterPro"/>
</dbReference>
<dbReference type="GO" id="GO:0003899">
    <property type="term" value="F:DNA-directed RNA polymerase activity"/>
    <property type="evidence" value="ECO:0007669"/>
    <property type="project" value="InterPro"/>
</dbReference>
<dbReference type="GO" id="GO:0008270">
    <property type="term" value="F:zinc ion binding"/>
    <property type="evidence" value="ECO:0007669"/>
    <property type="project" value="InterPro"/>
</dbReference>
<dbReference type="GO" id="GO:0006351">
    <property type="term" value="P:DNA-templated transcription"/>
    <property type="evidence" value="ECO:0007669"/>
    <property type="project" value="InterPro"/>
</dbReference>
<dbReference type="FunFam" id="1.10.10.60:FF:000024">
    <property type="entry name" value="DNA-directed RNA polymerases I, II, and III subunit"/>
    <property type="match status" value="1"/>
</dbReference>
<dbReference type="Gene3D" id="1.10.10.60">
    <property type="entry name" value="Homeodomain-like"/>
    <property type="match status" value="1"/>
</dbReference>
<dbReference type="InterPro" id="IPR023580">
    <property type="entry name" value="RNA_pol_su_RPB10"/>
</dbReference>
<dbReference type="InterPro" id="IPR020789">
    <property type="entry name" value="RNA_pol_suN_Zn-BS"/>
</dbReference>
<dbReference type="InterPro" id="IPR000268">
    <property type="entry name" value="RPABC5/Rpb10"/>
</dbReference>
<dbReference type="NCBIfam" id="NF003089">
    <property type="entry name" value="PRK04016.1"/>
    <property type="match status" value="1"/>
</dbReference>
<dbReference type="PANTHER" id="PTHR23431">
    <property type="entry name" value="DNA-DIRECTED RNA POLYMERASES I, II, AND III SUBUNIT RPABC5 FAMILY MEMBER"/>
    <property type="match status" value="1"/>
</dbReference>
<dbReference type="PANTHER" id="PTHR23431:SF5">
    <property type="entry name" value="DNA-DIRECTED RNA POLYMERASES II, IV AND V SUBUNIT 10"/>
    <property type="match status" value="1"/>
</dbReference>
<dbReference type="Pfam" id="PF01194">
    <property type="entry name" value="RNA_pol_N"/>
    <property type="match status" value="1"/>
</dbReference>
<dbReference type="PIRSF" id="PIRSF005653">
    <property type="entry name" value="RNA_pol_N/8_sub"/>
    <property type="match status" value="1"/>
</dbReference>
<dbReference type="SUPFAM" id="SSF46924">
    <property type="entry name" value="RNA polymerase subunit RPB10"/>
    <property type="match status" value="1"/>
</dbReference>
<dbReference type="PROSITE" id="PS01112">
    <property type="entry name" value="RNA_POL_N_8KD"/>
    <property type="match status" value="1"/>
</dbReference>
<organism>
    <name type="scientific">Arabidopsis thaliana</name>
    <name type="common">Mouse-ear cress</name>
    <dbReference type="NCBI Taxonomy" id="3702"/>
    <lineage>
        <taxon>Eukaryota</taxon>
        <taxon>Viridiplantae</taxon>
        <taxon>Streptophyta</taxon>
        <taxon>Embryophyta</taxon>
        <taxon>Tracheophyta</taxon>
        <taxon>Spermatophyta</taxon>
        <taxon>Magnoliopsida</taxon>
        <taxon>eudicotyledons</taxon>
        <taxon>Gunneridae</taxon>
        <taxon>Pentapetalae</taxon>
        <taxon>rosids</taxon>
        <taxon>malvids</taxon>
        <taxon>Brassicales</taxon>
        <taxon>Brassicaceae</taxon>
        <taxon>Camelineae</taxon>
        <taxon>Arabidopsis</taxon>
    </lineage>
</organism>
<keyword id="KW-0002">3D-structure</keyword>
<keyword id="KW-0240">DNA-directed RNA polymerase</keyword>
<keyword id="KW-0479">Metal-binding</keyword>
<keyword id="KW-0539">Nucleus</keyword>
<keyword id="KW-1185">Reference proteome</keyword>
<keyword id="KW-0804">Transcription</keyword>
<keyword id="KW-0862">Zinc</keyword>